<proteinExistence type="evidence at protein level"/>
<name>ASG2_ARATH</name>
<accession>Q94BQ3</accession>
<accession>Q9LEU6</accession>
<reference key="1">
    <citation type="journal article" date="2000" name="Nature">
        <title>Sequence and analysis of chromosome 5 of the plant Arabidopsis thaliana.</title>
        <authorList>
            <person name="Tabata S."/>
            <person name="Kaneko T."/>
            <person name="Nakamura Y."/>
            <person name="Kotani H."/>
            <person name="Kato T."/>
            <person name="Asamizu E."/>
            <person name="Miyajima N."/>
            <person name="Sasamoto S."/>
            <person name="Kimura T."/>
            <person name="Hosouchi T."/>
            <person name="Kawashima K."/>
            <person name="Kohara M."/>
            <person name="Matsumoto M."/>
            <person name="Matsuno A."/>
            <person name="Muraki A."/>
            <person name="Nakayama S."/>
            <person name="Nakazaki N."/>
            <person name="Naruo K."/>
            <person name="Okumura S."/>
            <person name="Shinpo S."/>
            <person name="Takeuchi C."/>
            <person name="Wada T."/>
            <person name="Watanabe A."/>
            <person name="Yamada M."/>
            <person name="Yasuda M."/>
            <person name="Sato S."/>
            <person name="de la Bastide M."/>
            <person name="Huang E."/>
            <person name="Spiegel L."/>
            <person name="Gnoj L."/>
            <person name="O'Shaughnessy A."/>
            <person name="Preston R."/>
            <person name="Habermann K."/>
            <person name="Murray J."/>
            <person name="Johnson D."/>
            <person name="Rohlfing T."/>
            <person name="Nelson J."/>
            <person name="Stoneking T."/>
            <person name="Pepin K."/>
            <person name="Spieth J."/>
            <person name="Sekhon M."/>
            <person name="Armstrong J."/>
            <person name="Becker M."/>
            <person name="Belter E."/>
            <person name="Cordum H."/>
            <person name="Cordes M."/>
            <person name="Courtney L."/>
            <person name="Courtney W."/>
            <person name="Dante M."/>
            <person name="Du H."/>
            <person name="Edwards J."/>
            <person name="Fryman J."/>
            <person name="Haakensen B."/>
            <person name="Lamar E."/>
            <person name="Latreille P."/>
            <person name="Leonard S."/>
            <person name="Meyer R."/>
            <person name="Mulvaney E."/>
            <person name="Ozersky P."/>
            <person name="Riley A."/>
            <person name="Strowmatt C."/>
            <person name="Wagner-McPherson C."/>
            <person name="Wollam A."/>
            <person name="Yoakum M."/>
            <person name="Bell M."/>
            <person name="Dedhia N."/>
            <person name="Parnell L."/>
            <person name="Shah R."/>
            <person name="Rodriguez M."/>
            <person name="Hoon See L."/>
            <person name="Vil D."/>
            <person name="Baker J."/>
            <person name="Kirchoff K."/>
            <person name="Toth K."/>
            <person name="King L."/>
            <person name="Bahret A."/>
            <person name="Miller B."/>
            <person name="Marra M.A."/>
            <person name="Martienssen R."/>
            <person name="McCombie W.R."/>
            <person name="Wilson R.K."/>
            <person name="Murphy G."/>
            <person name="Bancroft I."/>
            <person name="Volckaert G."/>
            <person name="Wambutt R."/>
            <person name="Duesterhoeft A."/>
            <person name="Stiekema W."/>
            <person name="Pohl T."/>
            <person name="Entian K.-D."/>
            <person name="Terryn N."/>
            <person name="Hartley N."/>
            <person name="Bent E."/>
            <person name="Johnson S."/>
            <person name="Langham S.-A."/>
            <person name="McCullagh B."/>
            <person name="Robben J."/>
            <person name="Grymonprez B."/>
            <person name="Zimmermann W."/>
            <person name="Ramsperger U."/>
            <person name="Wedler H."/>
            <person name="Balke K."/>
            <person name="Wedler E."/>
            <person name="Peters S."/>
            <person name="van Staveren M."/>
            <person name="Dirkse W."/>
            <person name="Mooijman P."/>
            <person name="Klein Lankhorst R."/>
            <person name="Weitzenegger T."/>
            <person name="Bothe G."/>
            <person name="Rose M."/>
            <person name="Hauf J."/>
            <person name="Berneiser S."/>
            <person name="Hempel S."/>
            <person name="Feldpausch M."/>
            <person name="Lamberth S."/>
            <person name="Villarroel R."/>
            <person name="Gielen J."/>
            <person name="Ardiles W."/>
            <person name="Bents O."/>
            <person name="Lemcke K."/>
            <person name="Kolesov G."/>
            <person name="Mayer K.F.X."/>
            <person name="Rudd S."/>
            <person name="Schoof H."/>
            <person name="Schueller C."/>
            <person name="Zaccaria P."/>
            <person name="Mewes H.-W."/>
            <person name="Bevan M."/>
            <person name="Fransz P.F."/>
        </authorList>
    </citation>
    <scope>NUCLEOTIDE SEQUENCE [LARGE SCALE GENOMIC DNA]</scope>
    <source>
        <strain>cv. Columbia</strain>
    </source>
</reference>
<reference key="2">
    <citation type="journal article" date="2017" name="Plant J.">
        <title>Araport11: a complete reannotation of the Arabidopsis thaliana reference genome.</title>
        <authorList>
            <person name="Cheng C.Y."/>
            <person name="Krishnakumar V."/>
            <person name="Chan A.P."/>
            <person name="Thibaud-Nissen F."/>
            <person name="Schobel S."/>
            <person name="Town C.D."/>
        </authorList>
    </citation>
    <scope>GENOME REANNOTATION</scope>
    <source>
        <strain>cv. Columbia</strain>
    </source>
</reference>
<reference key="3">
    <citation type="journal article" date="2003" name="Science">
        <title>Empirical analysis of transcriptional activity in the Arabidopsis genome.</title>
        <authorList>
            <person name="Yamada K."/>
            <person name="Lim J."/>
            <person name="Dale J.M."/>
            <person name="Chen H."/>
            <person name="Shinn P."/>
            <person name="Palm C.J."/>
            <person name="Southwick A.M."/>
            <person name="Wu H.C."/>
            <person name="Kim C.J."/>
            <person name="Nguyen M."/>
            <person name="Pham P.K."/>
            <person name="Cheuk R.F."/>
            <person name="Karlin-Newmann G."/>
            <person name="Liu S.X."/>
            <person name="Lam B."/>
            <person name="Sakano H."/>
            <person name="Wu T."/>
            <person name="Yu G."/>
            <person name="Miranda M."/>
            <person name="Quach H.L."/>
            <person name="Tripp M."/>
            <person name="Chang C.H."/>
            <person name="Lee J.M."/>
            <person name="Toriumi M.J."/>
            <person name="Chan M.M."/>
            <person name="Tang C.C."/>
            <person name="Onodera C.S."/>
            <person name="Deng J.M."/>
            <person name="Akiyama K."/>
            <person name="Ansari Y."/>
            <person name="Arakawa T."/>
            <person name="Banh J."/>
            <person name="Banno F."/>
            <person name="Bowser L."/>
            <person name="Brooks S.Y."/>
            <person name="Carninci P."/>
            <person name="Chao Q."/>
            <person name="Choy N."/>
            <person name="Enju A."/>
            <person name="Goldsmith A.D."/>
            <person name="Gurjal M."/>
            <person name="Hansen N.F."/>
            <person name="Hayashizaki Y."/>
            <person name="Johnson-Hopson C."/>
            <person name="Hsuan V.W."/>
            <person name="Iida K."/>
            <person name="Karnes M."/>
            <person name="Khan S."/>
            <person name="Koesema E."/>
            <person name="Ishida J."/>
            <person name="Jiang P.X."/>
            <person name="Jones T."/>
            <person name="Kawai J."/>
            <person name="Kamiya A."/>
            <person name="Meyers C."/>
            <person name="Nakajima M."/>
            <person name="Narusaka M."/>
            <person name="Seki M."/>
            <person name="Sakurai T."/>
            <person name="Satou M."/>
            <person name="Tamse R."/>
            <person name="Vaysberg M."/>
            <person name="Wallender E.K."/>
            <person name="Wong C."/>
            <person name="Yamamura Y."/>
            <person name="Yuan S."/>
            <person name="Shinozaki K."/>
            <person name="Davis R.W."/>
            <person name="Theologis A."/>
            <person name="Ecker J.R."/>
        </authorList>
    </citation>
    <scope>NUCLEOTIDE SEQUENCE [LARGE SCALE MRNA] (ISOFORM 1)</scope>
    <source>
        <strain>cv. Columbia</strain>
    </source>
</reference>
<reference key="4">
    <citation type="journal article" date="2008" name="Plant Cell">
        <title>Characterization of Arabidopsis and rice DWD proteins and their roles as substrate receptors for CUL4-RING E3 ubiquitin ligases.</title>
        <authorList>
            <person name="Lee J.H."/>
            <person name="Terzaghi W."/>
            <person name="Gusmaroli G."/>
            <person name="Charron J.B."/>
            <person name="Yoon H.J."/>
            <person name="Chen H."/>
            <person name="He Y.J."/>
            <person name="Xiong Y."/>
            <person name="Deng X.W."/>
        </authorList>
    </citation>
    <scope>GENE FAMILY</scope>
</reference>
<reference key="5">
    <citation type="journal article" date="2008" name="Plant Cell">
        <title>Arabidopsis DDB1-CUL4 ASSOCIATED FACTOR1 forms a nuclear E3 ubiquitin ligase with DDB1 and CUL4 that is involved in multiple plant developmental processes.</title>
        <authorList>
            <person name="Zhang Y."/>
            <person name="Feng S."/>
            <person name="Chen F."/>
            <person name="Chen H."/>
            <person name="Wang J."/>
            <person name="McCall C."/>
            <person name="Xiong Y."/>
            <person name="Deng X.W."/>
        </authorList>
    </citation>
    <scope>GENE FAMILY</scope>
</reference>
<reference key="6">
    <citation type="journal article" date="2009" name="Plant Physiol.">
        <title>Large-scale Arabidopsis phosphoproteome profiling reveals novel chloroplast kinase substrates and phosphorylation networks.</title>
        <authorList>
            <person name="Reiland S."/>
            <person name="Messerli G."/>
            <person name="Baerenfaller K."/>
            <person name="Gerrits B."/>
            <person name="Endler A."/>
            <person name="Grossmann J."/>
            <person name="Gruissem W."/>
            <person name="Baginsky S."/>
        </authorList>
    </citation>
    <scope>IDENTIFICATION BY MASS SPECTROMETRY [LARGE SCALE ANALYSIS]</scope>
</reference>
<reference key="7">
    <citation type="journal article" date="2016" name="Plant Cell Environ.">
        <title>ASG2 is a farnesylated DWD protein that acts as ABA negative regulator in Arabidopsis.</title>
        <authorList>
            <person name="Dutilleul C."/>
            <person name="Ribeiro I."/>
            <person name="Blanc N."/>
            <person name="Nezames C.D."/>
            <person name="Deng X.W."/>
            <person name="Zglobicki P."/>
            <person name="Palacio Barrera A.M."/>
            <person name="Atehortua L."/>
            <person name="Courtois M."/>
            <person name="Labas V."/>
            <person name="Giglioli-Guivarc'h N."/>
            <person name="Ducos E."/>
        </authorList>
    </citation>
    <scope>FUNCTION</scope>
    <scope>MUTAGENESIS OF 245-ARG--ARG-257 AND CYS-754</scope>
    <scope>DISRUPTION PHENOTYPE</scope>
    <scope>ISOPRENYLATION AT CYS-754</scope>
    <scope>SUBCELLULAR LOCATION</scope>
    <scope>INTERACTION WITH DDB1A</scope>
    <scope>NUCLEAR LOCALIZATION SIGNAL</scope>
    <source>
        <strain>cv. Columbia</strain>
    </source>
</reference>
<reference key="8">
    <citation type="journal article" date="2017" name="Genetics">
        <title>Remarkable evolutionary conservation of antiobesity ADIPOSE/WDTC1 homologs in animals and plants.</title>
        <authorList>
            <person name="Ducos E."/>
            <person name="Verges V."/>
            <person name="Duge de Bernonville T."/>
            <person name="Blanc N."/>
            <person name="Giglioli-Guivarc'h N."/>
            <person name="Dutilleul C."/>
        </authorList>
    </citation>
    <scope>FUNCTION</scope>
    <scope>MUTAGENESIS OF CYS-754</scope>
    <scope>DISRUPTION PHENOTYPE</scope>
    <scope>INTERACTION WITH HDA9</scope>
    <scope>ISOPRENYLATION</scope>
    <scope>SUBCELLULAR LOCATION</scope>
    <scope>GENE FAMILY</scope>
    <source>
        <strain>cv. Columbia</strain>
    </source>
</reference>
<evidence type="ECO:0000250" key="1">
    <source>
        <dbReference type="UniProtKB" id="Q8N5D0"/>
    </source>
</evidence>
<evidence type="ECO:0000255" key="2"/>
<evidence type="ECO:0000255" key="3">
    <source>
        <dbReference type="PROSITE-ProRule" id="PRU00339"/>
    </source>
</evidence>
<evidence type="ECO:0000255" key="4">
    <source>
        <dbReference type="PROSITE-ProRule" id="PRU00768"/>
    </source>
</evidence>
<evidence type="ECO:0000256" key="5">
    <source>
        <dbReference type="SAM" id="MobiDB-lite"/>
    </source>
</evidence>
<evidence type="ECO:0000269" key="6">
    <source>
    </source>
</evidence>
<evidence type="ECO:0000269" key="7">
    <source>
    </source>
</evidence>
<evidence type="ECO:0000303" key="8">
    <source>
    </source>
</evidence>
<evidence type="ECO:0000305" key="9">
    <source>
    </source>
</evidence>
<evidence type="ECO:0000312" key="10">
    <source>
        <dbReference type="Araport" id="AT5G10940"/>
    </source>
</evidence>
<evidence type="ECO:0000312" key="11">
    <source>
        <dbReference type="EMBL" id="CAB96849.1"/>
    </source>
</evidence>
<feature type="chain" id="PRO_0000450280" description="Protein ALTERED SEED GERMINATION 2">
    <location>
        <begin position="1"/>
        <end position="757"/>
    </location>
</feature>
<feature type="repeat" description="WD 1" evidence="2">
    <location>
        <begin position="6"/>
        <end position="43"/>
    </location>
</feature>
<feature type="repeat" description="WD 2" evidence="2">
    <location>
        <begin position="48"/>
        <end position="87"/>
    </location>
</feature>
<feature type="repeat" description="WD 3" evidence="2">
    <location>
        <begin position="91"/>
        <end position="132"/>
    </location>
</feature>
<feature type="repeat" description="WD 4" evidence="2">
    <location>
        <begin position="145"/>
        <end position="185"/>
    </location>
</feature>
<feature type="repeat" description="WD 5" evidence="2">
    <location>
        <begin position="213"/>
        <end position="253"/>
    </location>
</feature>
<feature type="repeat" description="WD 6" evidence="2">
    <location>
        <begin position="277"/>
        <end position="316"/>
    </location>
</feature>
<feature type="repeat" description="TPR" evidence="3">
    <location>
        <begin position="442"/>
        <end position="475"/>
    </location>
</feature>
<feature type="repeat" description="WD 7" evidence="2">
    <location>
        <begin position="618"/>
        <end position="658"/>
    </location>
</feature>
<feature type="repeat" description="WD 8" evidence="2">
    <location>
        <begin position="661"/>
        <end position="700"/>
    </location>
</feature>
<feature type="region of interest" description="Disordered" evidence="5">
    <location>
        <begin position="519"/>
        <end position="601"/>
    </location>
</feature>
<feature type="short sequence motif" description="Nuclear localization signal" evidence="4 6">
    <location>
        <begin position="245"/>
        <end position="257"/>
    </location>
</feature>
<feature type="compositionally biased region" description="Basic and acidic residues" evidence="5">
    <location>
        <begin position="523"/>
        <end position="532"/>
    </location>
</feature>
<feature type="compositionally biased region" description="Acidic residues" evidence="5">
    <location>
        <begin position="533"/>
        <end position="543"/>
    </location>
</feature>
<feature type="compositionally biased region" description="Polar residues" evidence="5">
    <location>
        <begin position="582"/>
        <end position="601"/>
    </location>
</feature>
<feature type="lipid moiety-binding region" description="S-12-hydroxyfarnesyl cysteine; by FTB/ERA1" evidence="6">
    <location>
        <position position="754"/>
    </location>
</feature>
<feature type="splice variant" id="VSP_060594" description="In isoform 2.">
    <location>
        <begin position="312"/>
        <end position="314"/>
    </location>
</feature>
<feature type="mutagenesis site" description="Impaired nuclear localization." evidence="6">
    <location>
        <begin position="245"/>
        <end position="257"/>
    </location>
</feature>
<feature type="mutagenesis site" description="Impaired farnesylation leading to a constitutive localizes in both cytosol and nucleus, as well as reduced interaction with HDA9." evidence="6 7">
    <original>C</original>
    <variation>S</variation>
    <location>
        <position position="754"/>
    </location>
</feature>
<comment type="function">
    <text evidence="6 7 9">May function as a substrate adapter for CUL4-DDB1 E3 ubiquitin-protein ligase complex (Probable). Negative regulator of fatty acid biosynthetic process and accumulation (PubMed:28663238). Acts as an abscisic acid (ABA) negative regulator (PubMed:26147561). Involved in responses to salt (NaCl) and osmotic (e.g. in response to mannitol and PEG) stresses (PubMed:26147561).</text>
</comment>
<comment type="pathway">
    <text evidence="1">Protein modification; protein ubiquitination.</text>
</comment>
<comment type="subunit">
    <text evidence="6 7">Interacts with DDB1; the subcellular localization of this complex depends on farnesylation status (PubMed:26147561). Binds to HDA9 in the cytosol when farnesylated (PubMed:28663238).</text>
</comment>
<comment type="subcellular location">
    <subcellularLocation>
        <location evidence="4 6">Nucleus</location>
    </subcellularLocation>
    <subcellularLocation>
        <location evidence="6 7">Cytoplasm</location>
        <location evidence="6 7">Cytosol</location>
    </subcellularLocation>
    <text evidence="6">Excluded from the nucleus when farnesylated at Cys-754.</text>
</comment>
<comment type="alternative products">
    <event type="alternative splicing"/>
    <isoform>
        <id>Q94BQ3-1</id>
        <name>1</name>
        <sequence type="displayed"/>
    </isoform>
    <isoform>
        <id>Q94BQ3-2</id>
        <name>2</name>
        <sequence type="described" ref="VSP_060594"/>
    </isoform>
</comment>
<comment type="PTM">
    <text evidence="6 7">Farnesylated at Cys-754 by FTB/ERA1; this modification triggers an exclusion from the nucleus.</text>
</comment>
<comment type="disruption phenotype">
    <text evidence="6 7">Production of 'obese' seeds characterized by increased weight, oil body density and higher fatty acid contents (PubMed:28663238). Increased sensitivity to abscisic acid (ABA) as well as salt (NaCl) and osmotic (e.g. in response to mannitol and PEG) stresses in term of seed germination and roots elongation (PubMed:26147561).</text>
</comment>
<protein>
    <recommendedName>
        <fullName evidence="8">Protein ALTERED SEED GERMINATION 2</fullName>
    </recommendedName>
</protein>
<dbReference type="EMBL" id="AL365234">
    <property type="protein sequence ID" value="CAB96849.1"/>
    <property type="molecule type" value="Genomic_DNA"/>
</dbReference>
<dbReference type="EMBL" id="CP002688">
    <property type="protein sequence ID" value="AED91611.1"/>
    <property type="molecule type" value="Genomic_DNA"/>
</dbReference>
<dbReference type="EMBL" id="CP002688">
    <property type="protein sequence ID" value="AED91612.1"/>
    <property type="molecule type" value="Genomic_DNA"/>
</dbReference>
<dbReference type="EMBL" id="AY039964">
    <property type="protein sequence ID" value="AAK64141.1"/>
    <property type="molecule type" value="mRNA"/>
</dbReference>
<dbReference type="EMBL" id="AY150424">
    <property type="protein sequence ID" value="AAN12885.1"/>
    <property type="molecule type" value="mRNA"/>
</dbReference>
<dbReference type="PIR" id="T50803">
    <property type="entry name" value="T50803"/>
</dbReference>
<dbReference type="RefSeq" id="NP_001190286.1">
    <molecule id="Q94BQ3-2"/>
    <property type="nucleotide sequence ID" value="NM_001203357.2"/>
</dbReference>
<dbReference type="RefSeq" id="NP_568242.1">
    <molecule id="Q94BQ3-1"/>
    <property type="nucleotide sequence ID" value="NM_121132.4"/>
</dbReference>
<dbReference type="SMR" id="Q94BQ3"/>
<dbReference type="FunCoup" id="Q94BQ3">
    <property type="interactions" value="3862"/>
</dbReference>
<dbReference type="IntAct" id="Q94BQ3">
    <property type="interactions" value="1"/>
</dbReference>
<dbReference type="STRING" id="3702.Q94BQ3"/>
<dbReference type="iPTMnet" id="Q94BQ3"/>
<dbReference type="PaxDb" id="3702-AT5G10940.1"/>
<dbReference type="EnsemblPlants" id="AT5G10940.1">
    <molecule id="Q94BQ3-1"/>
    <property type="protein sequence ID" value="AT5G10940.1"/>
    <property type="gene ID" value="AT5G10940"/>
</dbReference>
<dbReference type="EnsemblPlants" id="AT5G10940.2">
    <molecule id="Q94BQ3-2"/>
    <property type="protein sequence ID" value="AT5G10940.2"/>
    <property type="gene ID" value="AT5G10940"/>
</dbReference>
<dbReference type="GeneID" id="830961"/>
<dbReference type="Gramene" id="AT5G10940.1">
    <molecule id="Q94BQ3-1"/>
    <property type="protein sequence ID" value="AT5G10940.1"/>
    <property type="gene ID" value="AT5G10940"/>
</dbReference>
<dbReference type="Gramene" id="AT5G10940.2">
    <molecule id="Q94BQ3-2"/>
    <property type="protein sequence ID" value="AT5G10940.2"/>
    <property type="gene ID" value="AT5G10940"/>
</dbReference>
<dbReference type="KEGG" id="ath:AT5G10940"/>
<dbReference type="Araport" id="AT5G10940"/>
<dbReference type="TAIR" id="AT5G10940">
    <property type="gene designation" value="ASG2"/>
</dbReference>
<dbReference type="eggNOG" id="KOG1310">
    <property type="taxonomic scope" value="Eukaryota"/>
</dbReference>
<dbReference type="HOGENOM" id="CLU_012381_3_0_1"/>
<dbReference type="InParanoid" id="Q94BQ3"/>
<dbReference type="OMA" id="YKQRYVG"/>
<dbReference type="OrthoDB" id="4869960at2759"/>
<dbReference type="PhylomeDB" id="Q94BQ3"/>
<dbReference type="UniPathway" id="UPA00143"/>
<dbReference type="PRO" id="PR:Q94BQ3"/>
<dbReference type="Proteomes" id="UP000006548">
    <property type="component" value="Chromosome 5"/>
</dbReference>
<dbReference type="ExpressionAtlas" id="Q94BQ3">
    <property type="expression patterns" value="baseline and differential"/>
</dbReference>
<dbReference type="GO" id="GO:0080008">
    <property type="term" value="C:Cul4-RING E3 ubiquitin ligase complex"/>
    <property type="evidence" value="ECO:0000250"/>
    <property type="project" value="TAIR"/>
</dbReference>
<dbReference type="GO" id="GO:0005829">
    <property type="term" value="C:cytosol"/>
    <property type="evidence" value="ECO:0000314"/>
    <property type="project" value="UniProtKB"/>
</dbReference>
<dbReference type="GO" id="GO:0005634">
    <property type="term" value="C:nucleus"/>
    <property type="evidence" value="ECO:0000314"/>
    <property type="project" value="TAIR"/>
</dbReference>
<dbReference type="GO" id="GO:0009506">
    <property type="term" value="C:plasmodesma"/>
    <property type="evidence" value="ECO:0007005"/>
    <property type="project" value="TAIR"/>
</dbReference>
<dbReference type="GO" id="GO:0009738">
    <property type="term" value="P:abscisic acid-activated signaling pathway"/>
    <property type="evidence" value="ECO:0007669"/>
    <property type="project" value="UniProtKB-KW"/>
</dbReference>
<dbReference type="GO" id="GO:0009788">
    <property type="term" value="P:negative regulation of abscisic acid-activated signaling pathway"/>
    <property type="evidence" value="ECO:0000315"/>
    <property type="project" value="UniProtKB"/>
</dbReference>
<dbReference type="GO" id="GO:0045717">
    <property type="term" value="P:negative regulation of fatty acid biosynthetic process"/>
    <property type="evidence" value="ECO:0000315"/>
    <property type="project" value="TAIR"/>
</dbReference>
<dbReference type="GO" id="GO:0016567">
    <property type="term" value="P:protein ubiquitination"/>
    <property type="evidence" value="ECO:0007669"/>
    <property type="project" value="UniProtKB-UniPathway"/>
</dbReference>
<dbReference type="GO" id="GO:0047484">
    <property type="term" value="P:regulation of response to osmotic stress"/>
    <property type="evidence" value="ECO:0000315"/>
    <property type="project" value="UniProtKB"/>
</dbReference>
<dbReference type="GO" id="GO:1901000">
    <property type="term" value="P:regulation of response to salt stress"/>
    <property type="evidence" value="ECO:0000315"/>
    <property type="project" value="UniProtKB"/>
</dbReference>
<dbReference type="FunFam" id="1.25.40.10:FF:002524">
    <property type="entry name" value="Transducin family protein / WD-40 repeat family protein"/>
    <property type="match status" value="1"/>
</dbReference>
<dbReference type="FunFam" id="2.130.10.10:FF:002473">
    <property type="entry name" value="Transducin family protein / WD-40 repeat family protein"/>
    <property type="match status" value="1"/>
</dbReference>
<dbReference type="Gene3D" id="1.25.40.10">
    <property type="entry name" value="Tetratricopeptide repeat domain"/>
    <property type="match status" value="1"/>
</dbReference>
<dbReference type="Gene3D" id="2.130.10.10">
    <property type="entry name" value="YVTN repeat-like/Quinoprotein amine dehydrogenase"/>
    <property type="match status" value="3"/>
</dbReference>
<dbReference type="InterPro" id="IPR045151">
    <property type="entry name" value="DCAF8"/>
</dbReference>
<dbReference type="InterPro" id="IPR011990">
    <property type="entry name" value="TPR-like_helical_dom_sf"/>
</dbReference>
<dbReference type="InterPro" id="IPR015943">
    <property type="entry name" value="WD40/YVTN_repeat-like_dom_sf"/>
</dbReference>
<dbReference type="InterPro" id="IPR036322">
    <property type="entry name" value="WD40_repeat_dom_sf"/>
</dbReference>
<dbReference type="InterPro" id="IPR001680">
    <property type="entry name" value="WD40_rpt"/>
</dbReference>
<dbReference type="PANTHER" id="PTHR15574:SF40">
    <property type="entry name" value="WD AND TETRATRICOPEPTIDE REPEATS PROTEIN 1"/>
    <property type="match status" value="1"/>
</dbReference>
<dbReference type="PANTHER" id="PTHR15574">
    <property type="entry name" value="WD REPEAT DOMAIN-CONTAINING FAMILY"/>
    <property type="match status" value="1"/>
</dbReference>
<dbReference type="Pfam" id="PF00400">
    <property type="entry name" value="WD40"/>
    <property type="match status" value="3"/>
</dbReference>
<dbReference type="SMART" id="SM00320">
    <property type="entry name" value="WD40"/>
    <property type="match status" value="6"/>
</dbReference>
<dbReference type="SUPFAM" id="SSF48452">
    <property type="entry name" value="TPR-like"/>
    <property type="match status" value="1"/>
</dbReference>
<dbReference type="SUPFAM" id="SSF50978">
    <property type="entry name" value="WD40 repeat-like"/>
    <property type="match status" value="1"/>
</dbReference>
<dbReference type="PROSITE" id="PS50082">
    <property type="entry name" value="WD_REPEATS_2"/>
    <property type="match status" value="2"/>
</dbReference>
<dbReference type="PROSITE" id="PS50294">
    <property type="entry name" value="WD_REPEATS_REGION"/>
    <property type="match status" value="2"/>
</dbReference>
<organism>
    <name type="scientific">Arabidopsis thaliana</name>
    <name type="common">Mouse-ear cress</name>
    <dbReference type="NCBI Taxonomy" id="3702"/>
    <lineage>
        <taxon>Eukaryota</taxon>
        <taxon>Viridiplantae</taxon>
        <taxon>Streptophyta</taxon>
        <taxon>Embryophyta</taxon>
        <taxon>Tracheophyta</taxon>
        <taxon>Spermatophyta</taxon>
        <taxon>Magnoliopsida</taxon>
        <taxon>eudicotyledons</taxon>
        <taxon>Gunneridae</taxon>
        <taxon>Pentapetalae</taxon>
        <taxon>rosids</taxon>
        <taxon>malvids</taxon>
        <taxon>Brassicales</taxon>
        <taxon>Brassicaceae</taxon>
        <taxon>Camelineae</taxon>
        <taxon>Arabidopsis</taxon>
    </lineage>
</organism>
<sequence length="757" mass="83830">MDNLSFHDGNIFNLLHTRSQDPSHEVDQRMQFHSSLVRRLSQEQELEGHQGCVNALAWNSNGSLLISGSDDLRINIWNYSSRKLLHSIDTGHTANIFCTKFVPETSDELVVSGAGDAEVRLFNTSRLSGRAEDDNAIIPSALYQCHTRRVKKLAVEPGNPNVVWSASEDGTLRQHDFRESTSCPPAGTAHQECRSVLLDLRSGAKRALADPPKQTLSLKSCDISATRPHLLLVGGSDAFARLYDRRMLPPLASSRKRMPPPPCVNYFCPMHLSERGRTNLHLTHVTFSPNGEEVLLSYSGEHVYLMNVNNGICSTGIMQYTPGDVDNLFSFSNNLHDVESPPQVSTTPQNGFHRSSNAATVKKCTELVEIAKWSLEEGTDVFYAIEAANEVLDAHSNDIESALRHECLCTRAALLLKRKWKNDAHMAVRDCHNARRIDASSFKAHYYMSEALQQLGKCKEALDFATAAQHMNPSDADIVAKVESIKRDLQAAGAEKNEETGAGTTRVLSLSDILYRSEANSDSSHDMSRSEREDSDYDEELELDIQTSLSDDEGRDTDSNSMRGSLNLRIHRVGDDKPMENTVDNASSGTASSSQNDRTSYQPEGAIDMKRRYVGHCNVGTDIKQASFLGQRGEYIASGSDDGRWFIWEKQTGRLMKVLVGDESVLNCIQCHPFDSVVATSGIDNTIKIWSPTASVPSIVAGGSAGPATANVVEVMESNQQKLSRNRENPLSVELMQRFRMQEFAEGNFHPFECTQS</sequence>
<gene>
    <name evidence="8" type="primary">ASG2</name>
    <name evidence="10" type="ordered locus">At5g10940</name>
    <name evidence="11" type="ORF">T30N20.210</name>
</gene>
<keyword id="KW-0938">Abscisic acid signaling pathway</keyword>
<keyword id="KW-0025">Alternative splicing</keyword>
<keyword id="KW-0175">Coiled coil</keyword>
<keyword id="KW-0963">Cytoplasm</keyword>
<keyword id="KW-0449">Lipoprotein</keyword>
<keyword id="KW-0539">Nucleus</keyword>
<keyword id="KW-0636">Prenylation</keyword>
<keyword id="KW-1185">Reference proteome</keyword>
<keyword id="KW-0677">Repeat</keyword>
<keyword id="KW-0802">TPR repeat</keyword>
<keyword id="KW-0853">WD repeat</keyword>